<name>SYR_BRUME</name>
<evidence type="ECO:0000255" key="1">
    <source>
        <dbReference type="HAMAP-Rule" id="MF_00123"/>
    </source>
</evidence>
<feature type="chain" id="PRO_0000151537" description="Arginine--tRNA ligase">
    <location>
        <begin position="1"/>
        <end position="585"/>
    </location>
</feature>
<feature type="short sequence motif" description="'HIGH' region">
    <location>
        <begin position="131"/>
        <end position="141"/>
    </location>
</feature>
<proteinExistence type="inferred from homology"/>
<protein>
    <recommendedName>
        <fullName evidence="1">Arginine--tRNA ligase</fullName>
        <ecNumber evidence="1">6.1.1.19</ecNumber>
    </recommendedName>
    <alternativeName>
        <fullName evidence="1">Arginyl-tRNA synthetase</fullName>
        <shortName evidence="1">ArgRS</shortName>
    </alternativeName>
</protein>
<comment type="catalytic activity">
    <reaction evidence="1">
        <text>tRNA(Arg) + L-arginine + ATP = L-arginyl-tRNA(Arg) + AMP + diphosphate</text>
        <dbReference type="Rhea" id="RHEA:20301"/>
        <dbReference type="Rhea" id="RHEA-COMP:9658"/>
        <dbReference type="Rhea" id="RHEA-COMP:9673"/>
        <dbReference type="ChEBI" id="CHEBI:30616"/>
        <dbReference type="ChEBI" id="CHEBI:32682"/>
        <dbReference type="ChEBI" id="CHEBI:33019"/>
        <dbReference type="ChEBI" id="CHEBI:78442"/>
        <dbReference type="ChEBI" id="CHEBI:78513"/>
        <dbReference type="ChEBI" id="CHEBI:456215"/>
        <dbReference type="EC" id="6.1.1.19"/>
    </reaction>
</comment>
<comment type="subunit">
    <text evidence="1">Monomer.</text>
</comment>
<comment type="subcellular location">
    <subcellularLocation>
        <location evidence="1">Cytoplasm</location>
    </subcellularLocation>
</comment>
<comment type="similarity">
    <text evidence="1">Belongs to the class-I aminoacyl-tRNA synthetase family.</text>
</comment>
<keyword id="KW-0030">Aminoacyl-tRNA synthetase</keyword>
<keyword id="KW-0067">ATP-binding</keyword>
<keyword id="KW-0963">Cytoplasm</keyword>
<keyword id="KW-0436">Ligase</keyword>
<keyword id="KW-0547">Nucleotide-binding</keyword>
<keyword id="KW-0648">Protein biosynthesis</keyword>
<reference key="1">
    <citation type="journal article" date="2002" name="Proc. Natl. Acad. Sci. U.S.A.">
        <title>The genome sequence of the facultative intracellular pathogen Brucella melitensis.</title>
        <authorList>
            <person name="DelVecchio V.G."/>
            <person name="Kapatral V."/>
            <person name="Redkar R.J."/>
            <person name="Patra G."/>
            <person name="Mujer C."/>
            <person name="Los T."/>
            <person name="Ivanova N."/>
            <person name="Anderson I."/>
            <person name="Bhattacharyya A."/>
            <person name="Lykidis A."/>
            <person name="Reznik G."/>
            <person name="Jablonski L."/>
            <person name="Larsen N."/>
            <person name="D'Souza M."/>
            <person name="Bernal A."/>
            <person name="Mazur M."/>
            <person name="Goltsman E."/>
            <person name="Selkov E."/>
            <person name="Elzer P.H."/>
            <person name="Hagius S."/>
            <person name="O'Callaghan D."/>
            <person name="Letesson J.-J."/>
            <person name="Haselkorn R."/>
            <person name="Kyrpides N.C."/>
            <person name="Overbeek R."/>
        </authorList>
    </citation>
    <scope>NUCLEOTIDE SEQUENCE [LARGE SCALE GENOMIC DNA]</scope>
    <source>
        <strain>ATCC 23456 / CCUG 17765 / NCTC 10094 / 16M</strain>
    </source>
</reference>
<accession>Q8YGR9</accession>
<sequence>MNIFADFDARIKKTLQDIDLKPKDGGELDLSRIGVEPPRDASHGDIATNAAMVLSKAVGQNPRELAARIAEALKADEDVESVDVAGPGFINLRLKASYWQRELLVMLNEGTDFGRSRLGAGKKVNVEYVSANPTGPMHVGHCRGAVVGDVLANLLKFAGYDVVKEYYINDAGAQIDVLARSVMLRYREALGESIGEIPAGLYPGDYLVRVGQELAGEFGTKLLEMPEAEALAIVKDRTIDAMMAMIRADLDALNVHHDVFYSERKLHVDHARAIRNAINDLTLKGHVYKGKLPPPKGQLPEDWEDREQTLFRSTEVGDDIDRPLMKSDGSFTYFAGDVAYFKDKYDHGFNEMIYVLGADHGGYVKRLEAVARAVSDGKAKLTVLLCQLVKLFRNGEPVRMSKRAGEFITLRDVVDEVGRDPVRFMMLYRKNDAPLDFDFAKVTEQSKDNPVFYVQYASARCHSVFRQAADQLGLVDLDRVAMGSHFEKLTDESEIALVRKLAEYPRLIESAAIHQEPHRLAFYLYDLASSFHSQWNRGAENPDLRFIKVNDPDLSLARLGLVQVVSDVLTSGLTIIGADAPTEMR</sequence>
<dbReference type="EC" id="6.1.1.19" evidence="1"/>
<dbReference type="EMBL" id="AE008917">
    <property type="protein sequence ID" value="AAL52270.1"/>
    <property type="molecule type" value="Genomic_DNA"/>
</dbReference>
<dbReference type="PIR" id="AC3388">
    <property type="entry name" value="AC3388"/>
</dbReference>
<dbReference type="RefSeq" id="WP_004683695.1">
    <property type="nucleotide sequence ID" value="NC_003317.1"/>
</dbReference>
<dbReference type="SMR" id="Q8YGR9"/>
<dbReference type="GeneID" id="29593918"/>
<dbReference type="KEGG" id="bme:BMEI1089"/>
<dbReference type="KEGG" id="bmel:DK63_323"/>
<dbReference type="PATRIC" id="fig|224914.52.peg.334"/>
<dbReference type="eggNOG" id="COG0018">
    <property type="taxonomic scope" value="Bacteria"/>
</dbReference>
<dbReference type="PhylomeDB" id="Q8YGR9"/>
<dbReference type="Proteomes" id="UP000000419">
    <property type="component" value="Chromosome I"/>
</dbReference>
<dbReference type="GO" id="GO:0005737">
    <property type="term" value="C:cytoplasm"/>
    <property type="evidence" value="ECO:0007669"/>
    <property type="project" value="UniProtKB-SubCell"/>
</dbReference>
<dbReference type="GO" id="GO:0004814">
    <property type="term" value="F:arginine-tRNA ligase activity"/>
    <property type="evidence" value="ECO:0007669"/>
    <property type="project" value="UniProtKB-UniRule"/>
</dbReference>
<dbReference type="GO" id="GO:0005524">
    <property type="term" value="F:ATP binding"/>
    <property type="evidence" value="ECO:0007669"/>
    <property type="project" value="UniProtKB-UniRule"/>
</dbReference>
<dbReference type="GO" id="GO:0006420">
    <property type="term" value="P:arginyl-tRNA aminoacylation"/>
    <property type="evidence" value="ECO:0007669"/>
    <property type="project" value="UniProtKB-UniRule"/>
</dbReference>
<dbReference type="CDD" id="cd00671">
    <property type="entry name" value="ArgRS_core"/>
    <property type="match status" value="1"/>
</dbReference>
<dbReference type="Gene3D" id="3.30.1360.70">
    <property type="entry name" value="Arginyl tRNA synthetase N-terminal domain"/>
    <property type="match status" value="1"/>
</dbReference>
<dbReference type="Gene3D" id="3.40.50.620">
    <property type="entry name" value="HUPs"/>
    <property type="match status" value="1"/>
</dbReference>
<dbReference type="Gene3D" id="1.10.730.10">
    <property type="entry name" value="Isoleucyl-tRNA Synthetase, Domain 1"/>
    <property type="match status" value="1"/>
</dbReference>
<dbReference type="HAMAP" id="MF_00123">
    <property type="entry name" value="Arg_tRNA_synth"/>
    <property type="match status" value="1"/>
</dbReference>
<dbReference type="InterPro" id="IPR001412">
    <property type="entry name" value="aa-tRNA-synth_I_CS"/>
</dbReference>
<dbReference type="InterPro" id="IPR001278">
    <property type="entry name" value="Arg-tRNA-ligase"/>
</dbReference>
<dbReference type="InterPro" id="IPR005148">
    <property type="entry name" value="Arg-tRNA-synth_N"/>
</dbReference>
<dbReference type="InterPro" id="IPR036695">
    <property type="entry name" value="Arg-tRNA-synth_N_sf"/>
</dbReference>
<dbReference type="InterPro" id="IPR035684">
    <property type="entry name" value="ArgRS_core"/>
</dbReference>
<dbReference type="InterPro" id="IPR008909">
    <property type="entry name" value="DALR_anticod-bd"/>
</dbReference>
<dbReference type="InterPro" id="IPR014729">
    <property type="entry name" value="Rossmann-like_a/b/a_fold"/>
</dbReference>
<dbReference type="InterPro" id="IPR009080">
    <property type="entry name" value="tRNAsynth_Ia_anticodon-bd"/>
</dbReference>
<dbReference type="NCBIfam" id="TIGR00456">
    <property type="entry name" value="argS"/>
    <property type="match status" value="1"/>
</dbReference>
<dbReference type="PANTHER" id="PTHR11956:SF5">
    <property type="entry name" value="ARGININE--TRNA LIGASE, CYTOPLASMIC"/>
    <property type="match status" value="1"/>
</dbReference>
<dbReference type="PANTHER" id="PTHR11956">
    <property type="entry name" value="ARGINYL-TRNA SYNTHETASE"/>
    <property type="match status" value="1"/>
</dbReference>
<dbReference type="Pfam" id="PF03485">
    <property type="entry name" value="Arg_tRNA_synt_N"/>
    <property type="match status" value="1"/>
</dbReference>
<dbReference type="Pfam" id="PF05746">
    <property type="entry name" value="DALR_1"/>
    <property type="match status" value="1"/>
</dbReference>
<dbReference type="Pfam" id="PF00750">
    <property type="entry name" value="tRNA-synt_1d"/>
    <property type="match status" value="2"/>
</dbReference>
<dbReference type="PRINTS" id="PR01038">
    <property type="entry name" value="TRNASYNTHARG"/>
</dbReference>
<dbReference type="SMART" id="SM01016">
    <property type="entry name" value="Arg_tRNA_synt_N"/>
    <property type="match status" value="1"/>
</dbReference>
<dbReference type="SMART" id="SM00836">
    <property type="entry name" value="DALR_1"/>
    <property type="match status" value="1"/>
</dbReference>
<dbReference type="SUPFAM" id="SSF47323">
    <property type="entry name" value="Anticodon-binding domain of a subclass of class I aminoacyl-tRNA synthetases"/>
    <property type="match status" value="1"/>
</dbReference>
<dbReference type="SUPFAM" id="SSF55190">
    <property type="entry name" value="Arginyl-tRNA synthetase (ArgRS), N-terminal 'additional' domain"/>
    <property type="match status" value="1"/>
</dbReference>
<dbReference type="SUPFAM" id="SSF52374">
    <property type="entry name" value="Nucleotidylyl transferase"/>
    <property type="match status" value="1"/>
</dbReference>
<dbReference type="PROSITE" id="PS00178">
    <property type="entry name" value="AA_TRNA_LIGASE_I"/>
    <property type="match status" value="1"/>
</dbReference>
<organism>
    <name type="scientific">Brucella melitensis biotype 1 (strain ATCC 23456 / CCUG 17765 / NCTC 10094 / 16M)</name>
    <dbReference type="NCBI Taxonomy" id="224914"/>
    <lineage>
        <taxon>Bacteria</taxon>
        <taxon>Pseudomonadati</taxon>
        <taxon>Pseudomonadota</taxon>
        <taxon>Alphaproteobacteria</taxon>
        <taxon>Hyphomicrobiales</taxon>
        <taxon>Brucellaceae</taxon>
        <taxon>Brucella/Ochrobactrum group</taxon>
        <taxon>Brucella</taxon>
    </lineage>
</organism>
<gene>
    <name evidence="1" type="primary">argS</name>
    <name type="ordered locus">BMEI1089</name>
</gene>